<name>UBIG_ERWT9</name>
<reference key="1">
    <citation type="journal article" date="2008" name="Environ. Microbiol.">
        <title>The genome of Erwinia tasmaniensis strain Et1/99, a non-pathogenic bacterium in the genus Erwinia.</title>
        <authorList>
            <person name="Kube M."/>
            <person name="Migdoll A.M."/>
            <person name="Mueller I."/>
            <person name="Kuhl H."/>
            <person name="Beck A."/>
            <person name="Reinhardt R."/>
            <person name="Geider K."/>
        </authorList>
    </citation>
    <scope>NUCLEOTIDE SEQUENCE [LARGE SCALE GENOMIC DNA]</scope>
    <source>
        <strain>DSM 17950 / CFBP 7177 / CIP 109463 / NCPPB 4357 / Et1/99</strain>
    </source>
</reference>
<comment type="function">
    <text evidence="1">O-methyltransferase that catalyzes the 2 O-methylation steps in the ubiquinone biosynthetic pathway.</text>
</comment>
<comment type="catalytic activity">
    <reaction evidence="1">
        <text>a 3-demethylubiquinol + S-adenosyl-L-methionine = a ubiquinol + S-adenosyl-L-homocysteine + H(+)</text>
        <dbReference type="Rhea" id="RHEA:44380"/>
        <dbReference type="Rhea" id="RHEA-COMP:9566"/>
        <dbReference type="Rhea" id="RHEA-COMP:10914"/>
        <dbReference type="ChEBI" id="CHEBI:15378"/>
        <dbReference type="ChEBI" id="CHEBI:17976"/>
        <dbReference type="ChEBI" id="CHEBI:57856"/>
        <dbReference type="ChEBI" id="CHEBI:59789"/>
        <dbReference type="ChEBI" id="CHEBI:84422"/>
        <dbReference type="EC" id="2.1.1.64"/>
    </reaction>
</comment>
<comment type="catalytic activity">
    <reaction evidence="1">
        <text>a 3-(all-trans-polyprenyl)benzene-1,2-diol + S-adenosyl-L-methionine = a 2-methoxy-6-(all-trans-polyprenyl)phenol + S-adenosyl-L-homocysteine + H(+)</text>
        <dbReference type="Rhea" id="RHEA:31411"/>
        <dbReference type="Rhea" id="RHEA-COMP:9550"/>
        <dbReference type="Rhea" id="RHEA-COMP:9551"/>
        <dbReference type="ChEBI" id="CHEBI:15378"/>
        <dbReference type="ChEBI" id="CHEBI:57856"/>
        <dbReference type="ChEBI" id="CHEBI:59789"/>
        <dbReference type="ChEBI" id="CHEBI:62729"/>
        <dbReference type="ChEBI" id="CHEBI:62731"/>
        <dbReference type="EC" id="2.1.1.222"/>
    </reaction>
</comment>
<comment type="pathway">
    <text evidence="1">Cofactor biosynthesis; ubiquinone biosynthesis.</text>
</comment>
<comment type="similarity">
    <text evidence="1">Belongs to the methyltransferase superfamily. UbiG/COQ3 family.</text>
</comment>
<keyword id="KW-0489">Methyltransferase</keyword>
<keyword id="KW-1185">Reference proteome</keyword>
<keyword id="KW-0949">S-adenosyl-L-methionine</keyword>
<keyword id="KW-0808">Transferase</keyword>
<keyword id="KW-0831">Ubiquinone biosynthesis</keyword>
<organism>
    <name type="scientific">Erwinia tasmaniensis (strain DSM 17950 / CFBP 7177 / CIP 109463 / NCPPB 4357 / Et1/99)</name>
    <dbReference type="NCBI Taxonomy" id="465817"/>
    <lineage>
        <taxon>Bacteria</taxon>
        <taxon>Pseudomonadati</taxon>
        <taxon>Pseudomonadota</taxon>
        <taxon>Gammaproteobacteria</taxon>
        <taxon>Enterobacterales</taxon>
        <taxon>Erwiniaceae</taxon>
        <taxon>Erwinia</taxon>
    </lineage>
</organism>
<dbReference type="EC" id="2.1.1.222" evidence="1"/>
<dbReference type="EC" id="2.1.1.64" evidence="1"/>
<dbReference type="EMBL" id="CU468135">
    <property type="protein sequence ID" value="CAO96271.1"/>
    <property type="molecule type" value="Genomic_DNA"/>
</dbReference>
<dbReference type="RefSeq" id="WP_012440966.1">
    <property type="nucleotide sequence ID" value="NC_010694.1"/>
</dbReference>
<dbReference type="SMR" id="B2VIL6"/>
<dbReference type="STRING" id="465817.ETA_12250"/>
<dbReference type="KEGG" id="eta:ETA_12250"/>
<dbReference type="eggNOG" id="COG2227">
    <property type="taxonomic scope" value="Bacteria"/>
</dbReference>
<dbReference type="HOGENOM" id="CLU_042432_5_0_6"/>
<dbReference type="OrthoDB" id="9801538at2"/>
<dbReference type="UniPathway" id="UPA00232"/>
<dbReference type="Proteomes" id="UP000001726">
    <property type="component" value="Chromosome"/>
</dbReference>
<dbReference type="GO" id="GO:0102208">
    <property type="term" value="F:2-polyprenyl-6-hydroxyphenol methylase activity"/>
    <property type="evidence" value="ECO:0007669"/>
    <property type="project" value="UniProtKB-EC"/>
</dbReference>
<dbReference type="GO" id="GO:0061542">
    <property type="term" value="F:3-demethylubiquinol 3-O-methyltransferase activity"/>
    <property type="evidence" value="ECO:0007669"/>
    <property type="project" value="UniProtKB-UniRule"/>
</dbReference>
<dbReference type="GO" id="GO:0010420">
    <property type="term" value="F:polyprenyldihydroxybenzoate methyltransferase activity"/>
    <property type="evidence" value="ECO:0007669"/>
    <property type="project" value="InterPro"/>
</dbReference>
<dbReference type="GO" id="GO:0032259">
    <property type="term" value="P:methylation"/>
    <property type="evidence" value="ECO:0007669"/>
    <property type="project" value="UniProtKB-KW"/>
</dbReference>
<dbReference type="CDD" id="cd02440">
    <property type="entry name" value="AdoMet_MTases"/>
    <property type="match status" value="1"/>
</dbReference>
<dbReference type="FunFam" id="3.40.50.150:FF:000028">
    <property type="entry name" value="Ubiquinone biosynthesis O-methyltransferase"/>
    <property type="match status" value="1"/>
</dbReference>
<dbReference type="Gene3D" id="3.40.50.150">
    <property type="entry name" value="Vaccinia Virus protein VP39"/>
    <property type="match status" value="1"/>
</dbReference>
<dbReference type="HAMAP" id="MF_00472">
    <property type="entry name" value="UbiG"/>
    <property type="match status" value="1"/>
</dbReference>
<dbReference type="InterPro" id="IPR029063">
    <property type="entry name" value="SAM-dependent_MTases_sf"/>
</dbReference>
<dbReference type="InterPro" id="IPR010233">
    <property type="entry name" value="UbiG_MeTrfase"/>
</dbReference>
<dbReference type="NCBIfam" id="TIGR01983">
    <property type="entry name" value="UbiG"/>
    <property type="match status" value="1"/>
</dbReference>
<dbReference type="PANTHER" id="PTHR43464">
    <property type="entry name" value="METHYLTRANSFERASE"/>
    <property type="match status" value="1"/>
</dbReference>
<dbReference type="PANTHER" id="PTHR43464:SF19">
    <property type="entry name" value="UBIQUINONE BIOSYNTHESIS O-METHYLTRANSFERASE, MITOCHONDRIAL"/>
    <property type="match status" value="1"/>
</dbReference>
<dbReference type="Pfam" id="PF13489">
    <property type="entry name" value="Methyltransf_23"/>
    <property type="match status" value="1"/>
</dbReference>
<dbReference type="SUPFAM" id="SSF53335">
    <property type="entry name" value="S-adenosyl-L-methionine-dependent methyltransferases"/>
    <property type="match status" value="1"/>
</dbReference>
<accession>B2VIL6</accession>
<protein>
    <recommendedName>
        <fullName evidence="1">Ubiquinone biosynthesis O-methyltransferase</fullName>
    </recommendedName>
    <alternativeName>
        <fullName evidence="1">2-polyprenyl-6-hydroxyphenol methylase</fullName>
        <ecNumber evidence="1">2.1.1.222</ecNumber>
    </alternativeName>
    <alternativeName>
        <fullName evidence="1">3-demethylubiquinone 3-O-methyltransferase</fullName>
        <ecNumber evidence="1">2.1.1.64</ecNumber>
    </alternativeName>
</protein>
<proteinExistence type="inferred from homology"/>
<feature type="chain" id="PRO_1000199677" description="Ubiquinone biosynthesis O-methyltransferase">
    <location>
        <begin position="1"/>
        <end position="243"/>
    </location>
</feature>
<feature type="binding site" evidence="1">
    <location>
        <position position="44"/>
    </location>
    <ligand>
        <name>S-adenosyl-L-methionine</name>
        <dbReference type="ChEBI" id="CHEBI:59789"/>
    </ligand>
</feature>
<feature type="binding site" evidence="1">
    <location>
        <position position="64"/>
    </location>
    <ligand>
        <name>S-adenosyl-L-methionine</name>
        <dbReference type="ChEBI" id="CHEBI:59789"/>
    </ligand>
</feature>
<feature type="binding site" evidence="1">
    <location>
        <position position="85"/>
    </location>
    <ligand>
        <name>S-adenosyl-L-methionine</name>
        <dbReference type="ChEBI" id="CHEBI:59789"/>
    </ligand>
</feature>
<feature type="binding site" evidence="1">
    <location>
        <position position="129"/>
    </location>
    <ligand>
        <name>S-adenosyl-L-methionine</name>
        <dbReference type="ChEBI" id="CHEBI:59789"/>
    </ligand>
</feature>
<evidence type="ECO:0000255" key="1">
    <source>
        <dbReference type="HAMAP-Rule" id="MF_00472"/>
    </source>
</evidence>
<sequence>MKAEQNTDAHNVDRGEIAKFEAVASRWWDLEGEFKPLHRINPLRLDWIAQHANGLFGKKVLDVGCGGGILSESMAREGANVTGLDMGAEPLQVARLHALESGVNIDYVQQTVEEHADRFAGQYDVVTCMEMLEHVPDPRSVVHACAKLVKPGGEVFFSTLNRNSKSWLMAIVGAEYILRMVPRGTHDIKKFIRPGELLNWVDETPLRERHIIGLHYNPLTNRFKLAPGVDVNYMVHTHRNITD</sequence>
<gene>
    <name evidence="1" type="primary">ubiG</name>
    <name type="ordered locus">ETA_12250</name>
</gene>